<sequence length="574" mass="66062">MSSGIILLIVAIVLLVIIAYLVGVIIRKRNDSLITSLEERKQALFALPVNDEIEEVKSLHLIGQSQTSFREWNQKWVDLTVNSFADIENHIFEAENLNDTFNFIRAKHEINSVESQLNLVEEDIASIREALNILKEQEEKNSARVTHALDLYEKLQASISENEDNFGSTMPEIDKQMKNIETEFSQFVALNSSGDPVEASEVLDRAEEHTIALGQITEQIPAIVAKLEDDFPDQLDDLETGYRRLLEENYHFPEKNIEARFQEIRESIRANSSELVTLDLDRAREENTHIQERIDSLYEVFEREIAAYKVAAKNSKMLPRYLAHVKRNNEQLKDEIARLSRKYILSETESLTVKAFEKDIKEIEDSTLAVAEQFGLQEKPFSELQVTFERSIKTLTNVESGQMDVFAAVKDIEKIESQARHNLDVYVTQLHMIKRYMEKRHLPGIPQDFLSAFFTTSSQLEALMDELSRGRINIEAVSRLSEVATVAIANLEDLTYQVVQNATLTEQLLQYSNRYRSFEAGVQSSFEHALRLFEVENDYQASFDEISYALETVEPGVTDRFVNSYEKTREHIRF</sequence>
<organism>
    <name type="scientific">Streptococcus pyogenes serotype M3 (strain ATCC BAA-595 / MGAS315)</name>
    <dbReference type="NCBI Taxonomy" id="198466"/>
    <lineage>
        <taxon>Bacteria</taxon>
        <taxon>Bacillati</taxon>
        <taxon>Bacillota</taxon>
        <taxon>Bacilli</taxon>
        <taxon>Lactobacillales</taxon>
        <taxon>Streptococcaceae</taxon>
        <taxon>Streptococcus</taxon>
    </lineage>
</organism>
<reference key="1">
    <citation type="journal article" date="2002" name="Proc. Natl. Acad. Sci. U.S.A.">
        <title>Genome sequence of a serotype M3 strain of group A Streptococcus: phage-encoded toxins, the high-virulence phenotype, and clone emergence.</title>
        <authorList>
            <person name="Beres S.B."/>
            <person name="Sylva G.L."/>
            <person name="Barbian K.D."/>
            <person name="Lei B."/>
            <person name="Hoff J.S."/>
            <person name="Mammarella N.D."/>
            <person name="Liu M.-Y."/>
            <person name="Smoot J.C."/>
            <person name="Porcella S.F."/>
            <person name="Parkins L.D."/>
            <person name="Campbell D.S."/>
            <person name="Smith T.M."/>
            <person name="McCormick J.K."/>
            <person name="Leung D.Y.M."/>
            <person name="Schlievert P.M."/>
            <person name="Musser J.M."/>
        </authorList>
    </citation>
    <scope>NUCLEOTIDE SEQUENCE [LARGE SCALE GENOMIC DNA]</scope>
    <source>
        <strain>ATCC BAA-595 / MGAS315</strain>
    </source>
</reference>
<comment type="function">
    <text evidence="1">Negative regulator of FtsZ ring formation; modulates the frequency and position of FtsZ ring formation. Inhibits FtsZ ring formation at polar sites. Interacts either with FtsZ or with one of its binding partners to promote depolymerization.</text>
</comment>
<comment type="subcellular location">
    <subcellularLocation>
        <location>Cell membrane</location>
        <topology>Single-pass membrane protein</topology>
    </subcellularLocation>
    <text evidence="1">Colocalized with FtsZ to the nascent septal site.</text>
</comment>
<comment type="similarity">
    <text evidence="1">Belongs to the EzrA family.</text>
</comment>
<evidence type="ECO:0000255" key="1">
    <source>
        <dbReference type="HAMAP-Rule" id="MF_00728"/>
    </source>
</evidence>
<proteinExistence type="inferred from homology"/>
<dbReference type="EMBL" id="AE014074">
    <property type="protein sequence ID" value="AAM79084.1"/>
    <property type="molecule type" value="Genomic_DNA"/>
</dbReference>
<dbReference type="RefSeq" id="WP_002990455.1">
    <property type="nucleotide sequence ID" value="NC_004070.1"/>
</dbReference>
<dbReference type="SMR" id="P0DA98"/>
<dbReference type="GeneID" id="69901136"/>
<dbReference type="KEGG" id="spg:SpyM3_0477"/>
<dbReference type="HOGENOM" id="CLU_034079_2_0_9"/>
<dbReference type="Proteomes" id="UP000000564">
    <property type="component" value="Chromosome"/>
</dbReference>
<dbReference type="GO" id="GO:0005886">
    <property type="term" value="C:plasma membrane"/>
    <property type="evidence" value="ECO:0007669"/>
    <property type="project" value="UniProtKB-SubCell"/>
</dbReference>
<dbReference type="GO" id="GO:0005940">
    <property type="term" value="C:septin ring"/>
    <property type="evidence" value="ECO:0007669"/>
    <property type="project" value="InterPro"/>
</dbReference>
<dbReference type="GO" id="GO:0000917">
    <property type="term" value="P:division septum assembly"/>
    <property type="evidence" value="ECO:0007669"/>
    <property type="project" value="UniProtKB-KW"/>
</dbReference>
<dbReference type="GO" id="GO:0000921">
    <property type="term" value="P:septin ring assembly"/>
    <property type="evidence" value="ECO:0007669"/>
    <property type="project" value="InterPro"/>
</dbReference>
<dbReference type="HAMAP" id="MF_00728">
    <property type="entry name" value="EzrA"/>
    <property type="match status" value="1"/>
</dbReference>
<dbReference type="InterPro" id="IPR010379">
    <property type="entry name" value="EzrA"/>
</dbReference>
<dbReference type="NCBIfam" id="NF003407">
    <property type="entry name" value="PRK04778.1-1"/>
    <property type="match status" value="1"/>
</dbReference>
<dbReference type="NCBIfam" id="NF003410">
    <property type="entry name" value="PRK04778.1-4"/>
    <property type="match status" value="1"/>
</dbReference>
<dbReference type="Pfam" id="PF06160">
    <property type="entry name" value="EzrA"/>
    <property type="match status" value="1"/>
</dbReference>
<keyword id="KW-0131">Cell cycle</keyword>
<keyword id="KW-0132">Cell division</keyword>
<keyword id="KW-1003">Cell membrane</keyword>
<keyword id="KW-0175">Coiled coil</keyword>
<keyword id="KW-0472">Membrane</keyword>
<keyword id="KW-0717">Septation</keyword>
<keyword id="KW-0812">Transmembrane</keyword>
<keyword id="KW-1133">Transmembrane helix</keyword>
<accession>P0DA98</accession>
<accession>Q8K839</accession>
<feature type="chain" id="PRO_0000172892" description="Septation ring formation regulator EzrA">
    <location>
        <begin position="1"/>
        <end position="574"/>
    </location>
</feature>
<feature type="topological domain" description="Extracellular" evidence="1">
    <location>
        <begin position="1"/>
        <end position="7"/>
    </location>
</feature>
<feature type="transmembrane region" description="Helical" evidence="1">
    <location>
        <begin position="8"/>
        <end position="26"/>
    </location>
</feature>
<feature type="topological domain" description="Cytoplasmic" evidence="1">
    <location>
        <begin position="27"/>
        <end position="574"/>
    </location>
</feature>
<feature type="coiled-coil region" evidence="1">
    <location>
        <begin position="102"/>
        <end position="141"/>
    </location>
</feature>
<feature type="coiled-coil region" evidence="1">
    <location>
        <begin position="274"/>
        <end position="350"/>
    </location>
</feature>
<feature type="coiled-coil region" evidence="1">
    <location>
        <begin position="459"/>
        <end position="520"/>
    </location>
</feature>
<gene>
    <name evidence="1" type="primary">ezrA</name>
    <name type="ordered locus">SpyM3_0477</name>
</gene>
<name>EZRA_STRP3</name>
<protein>
    <recommendedName>
        <fullName evidence="1">Septation ring formation regulator EzrA</fullName>
    </recommendedName>
</protein>